<gene>
    <name type="primary">pob3</name>
    <name type="ORF">AFUA_7G05360</name>
</gene>
<comment type="function">
    <text evidence="1">Component of the FACT complex, a general chromatin factor that acts to reorganize nucleosomes. The FACT complex is involved in multiple processes that require DNA as a template such as mRNA elongation, DNA replication and DNA repair. During transcription elongation the FACT complex acts as a histone chaperone that both destabilizes and restores nucleosomal structure. It facilitates the passage of RNA polymerase II and transcription by promoting the dissociation of one histone H2A-H2B dimer from the nucleosome, then subsequently promotes the reestablishment of the nucleosome following the passage of RNA polymerase II (By similarity).</text>
</comment>
<comment type="subunit">
    <text evidence="1">Forms a stable heterodimer with spt16. The spt16-pob3 dimer weakly associates with multiple molecules of nhp6 to form the FACT complex (By similarity).</text>
</comment>
<comment type="subcellular location">
    <subcellularLocation>
        <location evidence="2">Nucleus</location>
    </subcellularLocation>
    <subcellularLocation>
        <location evidence="2">Chromosome</location>
    </subcellularLocation>
    <text evidence="2">Colocalizes with RNA polymerase II on chromatin. Recruited to actively transcribed loci.</text>
</comment>
<comment type="miscellaneous">
    <text>In contrast to the orthologous protein in animals and plants, this protein does not contain a HMG box DNA-binding domain. This function may instead be provided by the HMG box of the associated nhp6 protein in the FACT complex of fungi.</text>
</comment>
<comment type="similarity">
    <text evidence="4">Belongs to the SSRP1 family.</text>
</comment>
<protein>
    <recommendedName>
        <fullName>FACT complex subunit pob3</fullName>
    </recommendedName>
    <alternativeName>
        <fullName>Facilitates chromatin transcription complex subunit pob3</fullName>
    </alternativeName>
</protein>
<keyword id="KW-0158">Chromosome</keyword>
<keyword id="KW-0227">DNA damage</keyword>
<keyword id="KW-0234">DNA repair</keyword>
<keyword id="KW-0235">DNA replication</keyword>
<keyword id="KW-0539">Nucleus</keyword>
<keyword id="KW-1185">Reference proteome</keyword>
<keyword id="KW-0804">Transcription</keyword>
<keyword id="KW-0805">Transcription regulation</keyword>
<organism>
    <name type="scientific">Aspergillus fumigatus (strain ATCC MYA-4609 / CBS 101355 / FGSC A1100 / Af293)</name>
    <name type="common">Neosartorya fumigata</name>
    <dbReference type="NCBI Taxonomy" id="330879"/>
    <lineage>
        <taxon>Eukaryota</taxon>
        <taxon>Fungi</taxon>
        <taxon>Dikarya</taxon>
        <taxon>Ascomycota</taxon>
        <taxon>Pezizomycotina</taxon>
        <taxon>Eurotiomycetes</taxon>
        <taxon>Eurotiomycetidae</taxon>
        <taxon>Eurotiales</taxon>
        <taxon>Aspergillaceae</taxon>
        <taxon>Aspergillus</taxon>
        <taxon>Aspergillus subgen. Fumigati</taxon>
    </lineage>
</organism>
<feature type="chain" id="PRO_0000245200" description="FACT complex subunit pob3">
    <location>
        <begin position="1"/>
        <end position="573"/>
    </location>
</feature>
<feature type="region of interest" description="Disordered" evidence="3">
    <location>
        <begin position="153"/>
        <end position="174"/>
    </location>
</feature>
<feature type="region of interest" description="Disordered" evidence="3">
    <location>
        <begin position="485"/>
        <end position="573"/>
    </location>
</feature>
<feature type="compositionally biased region" description="Acidic residues" evidence="3">
    <location>
        <begin position="486"/>
        <end position="495"/>
    </location>
</feature>
<feature type="compositionally biased region" description="Basic and acidic residues" evidence="3">
    <location>
        <begin position="496"/>
        <end position="505"/>
    </location>
</feature>
<feature type="compositionally biased region" description="Acidic residues" evidence="3">
    <location>
        <begin position="506"/>
        <end position="530"/>
    </location>
</feature>
<feature type="compositionally biased region" description="Acidic residues" evidence="3">
    <location>
        <begin position="541"/>
        <end position="562"/>
    </location>
</feature>
<proteinExistence type="inferred from homology"/>
<reference key="1">
    <citation type="journal article" date="2005" name="Nature">
        <title>Genomic sequence of the pathogenic and allergenic filamentous fungus Aspergillus fumigatus.</title>
        <authorList>
            <person name="Nierman W.C."/>
            <person name="Pain A."/>
            <person name="Anderson M.J."/>
            <person name="Wortman J.R."/>
            <person name="Kim H.S."/>
            <person name="Arroyo J."/>
            <person name="Berriman M."/>
            <person name="Abe K."/>
            <person name="Archer D.B."/>
            <person name="Bermejo C."/>
            <person name="Bennett J.W."/>
            <person name="Bowyer P."/>
            <person name="Chen D."/>
            <person name="Collins M."/>
            <person name="Coulsen R."/>
            <person name="Davies R."/>
            <person name="Dyer P.S."/>
            <person name="Farman M.L."/>
            <person name="Fedorova N."/>
            <person name="Fedorova N.D."/>
            <person name="Feldblyum T.V."/>
            <person name="Fischer R."/>
            <person name="Fosker N."/>
            <person name="Fraser A."/>
            <person name="Garcia J.L."/>
            <person name="Garcia M.J."/>
            <person name="Goble A."/>
            <person name="Goldman G.H."/>
            <person name="Gomi K."/>
            <person name="Griffith-Jones S."/>
            <person name="Gwilliam R."/>
            <person name="Haas B.J."/>
            <person name="Haas H."/>
            <person name="Harris D.E."/>
            <person name="Horiuchi H."/>
            <person name="Huang J."/>
            <person name="Humphray S."/>
            <person name="Jimenez J."/>
            <person name="Keller N."/>
            <person name="Khouri H."/>
            <person name="Kitamoto K."/>
            <person name="Kobayashi T."/>
            <person name="Konzack S."/>
            <person name="Kulkarni R."/>
            <person name="Kumagai T."/>
            <person name="Lafton A."/>
            <person name="Latge J.-P."/>
            <person name="Li W."/>
            <person name="Lord A."/>
            <person name="Lu C."/>
            <person name="Majoros W.H."/>
            <person name="May G.S."/>
            <person name="Miller B.L."/>
            <person name="Mohamoud Y."/>
            <person name="Molina M."/>
            <person name="Monod M."/>
            <person name="Mouyna I."/>
            <person name="Mulligan S."/>
            <person name="Murphy L.D."/>
            <person name="O'Neil S."/>
            <person name="Paulsen I."/>
            <person name="Penalva M.A."/>
            <person name="Pertea M."/>
            <person name="Price C."/>
            <person name="Pritchard B.L."/>
            <person name="Quail M.A."/>
            <person name="Rabbinowitsch E."/>
            <person name="Rawlins N."/>
            <person name="Rajandream M.A."/>
            <person name="Reichard U."/>
            <person name="Renauld H."/>
            <person name="Robson G.D."/>
            <person name="Rodriguez de Cordoba S."/>
            <person name="Rodriguez-Pena J.M."/>
            <person name="Ronning C.M."/>
            <person name="Rutter S."/>
            <person name="Salzberg S.L."/>
            <person name="Sanchez M."/>
            <person name="Sanchez-Ferrero J.C."/>
            <person name="Saunders D."/>
            <person name="Seeger K."/>
            <person name="Squares R."/>
            <person name="Squares S."/>
            <person name="Takeuchi M."/>
            <person name="Tekaia F."/>
            <person name="Turner G."/>
            <person name="Vazquez de Aldana C.R."/>
            <person name="Weidman J."/>
            <person name="White O."/>
            <person name="Woodward J.R."/>
            <person name="Yu J.-H."/>
            <person name="Fraser C.M."/>
            <person name="Galagan J.E."/>
            <person name="Asai K."/>
            <person name="Machida M."/>
            <person name="Hall N."/>
            <person name="Barrell B.G."/>
            <person name="Denning D.W."/>
        </authorList>
    </citation>
    <scope>NUCLEOTIDE SEQUENCE [LARGE SCALE GENOMIC DNA]</scope>
    <source>
        <strain>ATCC MYA-4609 / CBS 101355 / FGSC A1100 / Af293</strain>
    </source>
</reference>
<sequence>MRTAEAFDNIYLDLSKQPGKCKLAESGLGWRPSGGGETFTLDSNNIGAAQWSRAAKGYELKILSRSSGVIQLDGFDQEDFERLSKAFKIWYGINVENREHALRGWNWGKAEFTKAELAFNVQNRPAFEIPYSEISNTNLAGKNEVAVEFALTSDGDANAQPSGSTKNRGRKAAAGPDELVEMRFYIPGTAVKTEKGIKTENDENGEEEEEGEEQNAANLFYETLMEKAEIGDVAGDTFATFLDVLHLTPRGRFDIDMYESSFRLRGKTYDYKIQYASIKKFFLLPKNDEMHTLIVLGLDPPLRQGQTRYPFLVMQLKLDEEISLELNMTEELLESRYKDKLEPRYEEPIHQVVTKIFRGLSGKKVIMPSKDFVSHHGHSGVKCSIKANEGLLYFLDKSLIFVPKPATYVQIENIAVITMSRVGGAVSASRTFDITVTLKAGMGEHQFSNINREEQQPLEEFFKAKNIRFKNEMSDDTSALIAAALDNDDMMSSDEDGGRADRGSADEDEESVDEDFQAESESDVAEEFDSEHESSGSASDAEMDDASDAGDDEEDVDMSEEEERPKKKSKIGK</sequence>
<evidence type="ECO:0000250" key="1"/>
<evidence type="ECO:0000250" key="2">
    <source>
        <dbReference type="UniProtKB" id="Q04636"/>
    </source>
</evidence>
<evidence type="ECO:0000256" key="3">
    <source>
        <dbReference type="SAM" id="MobiDB-lite"/>
    </source>
</evidence>
<evidence type="ECO:0000305" key="4"/>
<accession>Q4WGK6</accession>
<dbReference type="EMBL" id="AAHF01000009">
    <property type="protein sequence ID" value="EAL86935.2"/>
    <property type="molecule type" value="Genomic_DNA"/>
</dbReference>
<dbReference type="RefSeq" id="XP_748973.2">
    <property type="nucleotide sequence ID" value="XM_743880.2"/>
</dbReference>
<dbReference type="SMR" id="Q4WGK6"/>
<dbReference type="FunCoup" id="Q4WGK6">
    <property type="interactions" value="1022"/>
</dbReference>
<dbReference type="STRING" id="330879.Q4WGK6"/>
<dbReference type="EnsemblFungi" id="EAL86935">
    <property type="protein sequence ID" value="EAL86935"/>
    <property type="gene ID" value="AFUA_7G05360"/>
</dbReference>
<dbReference type="GeneID" id="3506357"/>
<dbReference type="KEGG" id="afm:AFUA_7G05360"/>
<dbReference type="eggNOG" id="KOG0526">
    <property type="taxonomic scope" value="Eukaryota"/>
</dbReference>
<dbReference type="HOGENOM" id="CLU_017374_3_0_1"/>
<dbReference type="InParanoid" id="Q4WGK6"/>
<dbReference type="OMA" id="QVVTKIF"/>
<dbReference type="OrthoDB" id="498543at2759"/>
<dbReference type="Proteomes" id="UP000002530">
    <property type="component" value="Chromosome 7"/>
</dbReference>
<dbReference type="GO" id="GO:0000781">
    <property type="term" value="C:chromosome, telomeric region"/>
    <property type="evidence" value="ECO:0007669"/>
    <property type="project" value="GOC"/>
</dbReference>
<dbReference type="GO" id="GO:0035101">
    <property type="term" value="C:FACT complex"/>
    <property type="evidence" value="ECO:0000318"/>
    <property type="project" value="GO_Central"/>
</dbReference>
<dbReference type="GO" id="GO:0003677">
    <property type="term" value="F:DNA binding"/>
    <property type="evidence" value="ECO:0007669"/>
    <property type="project" value="InterPro"/>
</dbReference>
<dbReference type="GO" id="GO:0042393">
    <property type="term" value="F:histone binding"/>
    <property type="evidence" value="ECO:0000318"/>
    <property type="project" value="GO_Central"/>
</dbReference>
<dbReference type="GO" id="GO:0031491">
    <property type="term" value="F:nucleosome binding"/>
    <property type="evidence" value="ECO:0000318"/>
    <property type="project" value="GO_Central"/>
</dbReference>
<dbReference type="GO" id="GO:0006281">
    <property type="term" value="P:DNA repair"/>
    <property type="evidence" value="ECO:0007669"/>
    <property type="project" value="UniProtKB-KW"/>
</dbReference>
<dbReference type="GO" id="GO:0006335">
    <property type="term" value="P:DNA replication-dependent chromatin assembly"/>
    <property type="evidence" value="ECO:0007669"/>
    <property type="project" value="EnsemblFungi"/>
</dbReference>
<dbReference type="GO" id="GO:0006261">
    <property type="term" value="P:DNA-templated DNA replication"/>
    <property type="evidence" value="ECO:0007669"/>
    <property type="project" value="EnsemblFungi"/>
</dbReference>
<dbReference type="GO" id="GO:0034728">
    <property type="term" value="P:nucleosome organization"/>
    <property type="evidence" value="ECO:0007669"/>
    <property type="project" value="EnsemblFungi"/>
</dbReference>
<dbReference type="GO" id="GO:0031508">
    <property type="term" value="P:pericentric heterochromatin formation"/>
    <property type="evidence" value="ECO:0007669"/>
    <property type="project" value="EnsemblFungi"/>
</dbReference>
<dbReference type="GO" id="GO:0045899">
    <property type="term" value="P:positive regulation of RNA polymerase II transcription preinitiation complex assembly"/>
    <property type="evidence" value="ECO:0007669"/>
    <property type="project" value="EnsemblFungi"/>
</dbReference>
<dbReference type="GO" id="GO:0030466">
    <property type="term" value="P:silent mating-type cassette heterochromatin formation"/>
    <property type="evidence" value="ECO:0007669"/>
    <property type="project" value="EnsemblFungi"/>
</dbReference>
<dbReference type="GO" id="GO:0031509">
    <property type="term" value="P:subtelomeric heterochromatin formation"/>
    <property type="evidence" value="ECO:0007669"/>
    <property type="project" value="EnsemblFungi"/>
</dbReference>
<dbReference type="CDD" id="cd13230">
    <property type="entry name" value="PH1_SSRP1-like"/>
    <property type="match status" value="1"/>
</dbReference>
<dbReference type="CDD" id="cd13231">
    <property type="entry name" value="PH2_SSRP1-like"/>
    <property type="match status" value="1"/>
</dbReference>
<dbReference type="CDD" id="cd13229">
    <property type="entry name" value="PH_TFIIH"/>
    <property type="match status" value="1"/>
</dbReference>
<dbReference type="FunFam" id="2.30.29.220:FF:000003">
    <property type="entry name" value="FACT complex subunit POB3"/>
    <property type="match status" value="1"/>
</dbReference>
<dbReference type="FunFam" id="2.30.29.30:FF:000146">
    <property type="entry name" value="FACT complex subunit POB3"/>
    <property type="match status" value="1"/>
</dbReference>
<dbReference type="FunFam" id="2.30.29.30:FF:000310">
    <property type="entry name" value="FACT complex subunit POB3"/>
    <property type="match status" value="1"/>
</dbReference>
<dbReference type="FunFam" id="2.30.29.150:FF:000001">
    <property type="entry name" value="Fact complex subunit ssrp1"/>
    <property type="match status" value="1"/>
</dbReference>
<dbReference type="Gene3D" id="2.30.29.150">
    <property type="match status" value="1"/>
</dbReference>
<dbReference type="Gene3D" id="2.30.29.30">
    <property type="entry name" value="Pleckstrin-homology domain (PH domain)/Phosphotyrosine-binding domain (PTB)"/>
    <property type="match status" value="2"/>
</dbReference>
<dbReference type="Gene3D" id="2.30.29.220">
    <property type="entry name" value="Structure-specific recognition protein (SSRP1)"/>
    <property type="match status" value="1"/>
</dbReference>
<dbReference type="InterPro" id="IPR011993">
    <property type="entry name" value="PH-like_dom_sf"/>
</dbReference>
<dbReference type="InterPro" id="IPR013719">
    <property type="entry name" value="RTT106/SPT16-like_middle_dom"/>
</dbReference>
<dbReference type="InterPro" id="IPR050454">
    <property type="entry name" value="RTT106/SSRP1_HistChap/FACT"/>
</dbReference>
<dbReference type="InterPro" id="IPR048993">
    <property type="entry name" value="SSRP1-like_PH1"/>
</dbReference>
<dbReference type="InterPro" id="IPR000969">
    <property type="entry name" value="SSRP1/POB3"/>
</dbReference>
<dbReference type="InterPro" id="IPR035417">
    <property type="entry name" value="SSRP1/POB3_N"/>
</dbReference>
<dbReference type="InterPro" id="IPR024954">
    <property type="entry name" value="SSRP1_DD"/>
</dbReference>
<dbReference type="InterPro" id="IPR038167">
    <property type="entry name" value="SSRP1_sf"/>
</dbReference>
<dbReference type="PANTHER" id="PTHR45849">
    <property type="entry name" value="FACT COMPLEX SUBUNIT SSRP1"/>
    <property type="match status" value="1"/>
</dbReference>
<dbReference type="PANTHER" id="PTHR45849:SF1">
    <property type="entry name" value="FACT COMPLEX SUBUNIT SSRP1"/>
    <property type="match status" value="1"/>
</dbReference>
<dbReference type="Pfam" id="PF21103">
    <property type="entry name" value="PH1_SSRP1-like"/>
    <property type="match status" value="1"/>
</dbReference>
<dbReference type="Pfam" id="PF17292">
    <property type="entry name" value="POB3_N"/>
    <property type="match status" value="1"/>
</dbReference>
<dbReference type="Pfam" id="PF08512">
    <property type="entry name" value="Rttp106-like_middle"/>
    <property type="match status" value="1"/>
</dbReference>
<dbReference type="Pfam" id="PF03531">
    <property type="entry name" value="SSrecog"/>
    <property type="match status" value="1"/>
</dbReference>
<dbReference type="PRINTS" id="PR00887">
    <property type="entry name" value="SSRCOGNITION"/>
</dbReference>
<dbReference type="SMART" id="SM01287">
    <property type="entry name" value="Rtt106"/>
    <property type="match status" value="1"/>
</dbReference>
<dbReference type="SUPFAM" id="SSF50729">
    <property type="entry name" value="PH domain-like"/>
    <property type="match status" value="1"/>
</dbReference>
<name>POB3_ASPFU</name>